<comment type="function">
    <text evidence="1">Has antibacterial activity against a variety of bacteria including S.aureus, P.aeruginosa and M.tuberculosis. Acts by inducing bacterial membrane breakage (By similarity).</text>
</comment>
<comment type="function">
    <text evidence="1">Induces production of reactive oxygen species (ROS) which are necessary for cell proliferation. May play a role in inducing oxidative DNA damage and replicative senescence. May play a role in the coordination of mitochondrial morphology and cell proliferation (By similarity).</text>
</comment>
<comment type="subcellular location">
    <subcellularLocation>
        <location evidence="1">Mitochondrion inner membrane</location>
        <topology evidence="1">Single-pass membrane protein</topology>
    </subcellularLocation>
</comment>
<comment type="similarity">
    <text evidence="3">Belongs to the MGR2 family.</text>
</comment>
<accession>A4QNF3</accession>
<evidence type="ECO:0000250" key="1"/>
<evidence type="ECO:0000255" key="2"/>
<evidence type="ECO:0000305" key="3"/>
<gene>
    <name type="primary">romo1</name>
</gene>
<keyword id="KW-0044">Antibiotic</keyword>
<keyword id="KW-0929">Antimicrobial</keyword>
<keyword id="KW-0472">Membrane</keyword>
<keyword id="KW-0496">Mitochondrion</keyword>
<keyword id="KW-0999">Mitochondrion inner membrane</keyword>
<keyword id="KW-1185">Reference proteome</keyword>
<keyword id="KW-0812">Transmembrane</keyword>
<keyword id="KW-1133">Transmembrane helix</keyword>
<sequence length="79" mass="8279">MPVAVGPYGQSQPSCFDRVKMGFMMGFAVGMAAGALFGTFSCLRFGMRGRELMGGVGKTMMQSGGTFGTFMAIGMGIRC</sequence>
<protein>
    <recommendedName>
        <fullName>Reactive oxygen species modulator 1</fullName>
        <shortName>ROS modulator 1</shortName>
    </recommendedName>
    <alternativeName>
        <fullName>Protein MGR2 homolog</fullName>
    </alternativeName>
</protein>
<reference key="1">
    <citation type="submission" date="2007-03" db="EMBL/GenBank/DDBJ databases">
        <authorList>
            <consortium name="NIH - Xenopus Gene Collection (XGC) project"/>
        </authorList>
    </citation>
    <scope>NUCLEOTIDE SEQUENCE [LARGE SCALE MRNA]</scope>
    <source>
        <tissue>Embryo</tissue>
    </source>
</reference>
<name>ROMO1_XENTR</name>
<organism>
    <name type="scientific">Xenopus tropicalis</name>
    <name type="common">Western clawed frog</name>
    <name type="synonym">Silurana tropicalis</name>
    <dbReference type="NCBI Taxonomy" id="8364"/>
    <lineage>
        <taxon>Eukaryota</taxon>
        <taxon>Metazoa</taxon>
        <taxon>Chordata</taxon>
        <taxon>Craniata</taxon>
        <taxon>Vertebrata</taxon>
        <taxon>Euteleostomi</taxon>
        <taxon>Amphibia</taxon>
        <taxon>Batrachia</taxon>
        <taxon>Anura</taxon>
        <taxon>Pipoidea</taxon>
        <taxon>Pipidae</taxon>
        <taxon>Xenopodinae</taxon>
        <taxon>Xenopus</taxon>
        <taxon>Silurana</taxon>
    </lineage>
</organism>
<feature type="chain" id="PRO_0000294149" description="Reactive oxygen species modulator 1">
    <location>
        <begin position="1"/>
        <end position="79"/>
    </location>
</feature>
<feature type="transmembrane region" description="Helical" evidence="2">
    <location>
        <begin position="23"/>
        <end position="43"/>
    </location>
</feature>
<feature type="region of interest" description="Sufficient for antibacterial activity" evidence="1">
    <location>
        <begin position="42"/>
        <end position="60"/>
    </location>
</feature>
<proteinExistence type="inferred from homology"/>
<dbReference type="EMBL" id="BC135588">
    <property type="protein sequence ID" value="AAI35589.1"/>
    <property type="molecule type" value="mRNA"/>
</dbReference>
<dbReference type="RefSeq" id="NP_001165117.1">
    <property type="nucleotide sequence ID" value="NM_001171646.1"/>
</dbReference>
<dbReference type="RefSeq" id="XP_017953153.1">
    <property type="nucleotide sequence ID" value="XM_018097664.2"/>
</dbReference>
<dbReference type="SMR" id="A4QNF3"/>
<dbReference type="FunCoup" id="A4QNF3">
    <property type="interactions" value="922"/>
</dbReference>
<dbReference type="STRING" id="8364.ENSXETP00000026519"/>
<dbReference type="PaxDb" id="8364-ENSXETP00000054288"/>
<dbReference type="DNASU" id="100125151"/>
<dbReference type="GeneID" id="100125151"/>
<dbReference type="KEGG" id="xtr:100125151"/>
<dbReference type="AGR" id="Xenbase:XB-GENE-982441"/>
<dbReference type="CTD" id="140823"/>
<dbReference type="Xenbase" id="XB-GENE-982441">
    <property type="gene designation" value="romo1"/>
</dbReference>
<dbReference type="eggNOG" id="KOG4096">
    <property type="taxonomic scope" value="Eukaryota"/>
</dbReference>
<dbReference type="HOGENOM" id="CLU_142435_2_0_1"/>
<dbReference type="InParanoid" id="A4QNF3"/>
<dbReference type="OMA" id="SCWDRVK"/>
<dbReference type="OrthoDB" id="5409308at2759"/>
<dbReference type="PhylomeDB" id="A4QNF3"/>
<dbReference type="TreeFam" id="TF300273"/>
<dbReference type="Proteomes" id="UP000008143">
    <property type="component" value="Chromosome 10"/>
</dbReference>
<dbReference type="Bgee" id="ENSXETG00000025474">
    <property type="expression patterns" value="Expressed in brain and 12 other cell types or tissues"/>
</dbReference>
<dbReference type="GO" id="GO:0005743">
    <property type="term" value="C:mitochondrial inner membrane"/>
    <property type="evidence" value="ECO:0007669"/>
    <property type="project" value="UniProtKB-SubCell"/>
</dbReference>
<dbReference type="GO" id="GO:0005739">
    <property type="term" value="C:mitochondrion"/>
    <property type="evidence" value="ECO:0000250"/>
    <property type="project" value="UniProtKB"/>
</dbReference>
<dbReference type="GO" id="GO:0034614">
    <property type="term" value="P:cellular response to reactive oxygen species"/>
    <property type="evidence" value="ECO:0000250"/>
    <property type="project" value="UniProtKB"/>
</dbReference>
<dbReference type="GO" id="GO:0042742">
    <property type="term" value="P:defense response to bacterium"/>
    <property type="evidence" value="ECO:0007669"/>
    <property type="project" value="UniProtKB-KW"/>
</dbReference>
<dbReference type="GO" id="GO:2000379">
    <property type="term" value="P:positive regulation of reactive oxygen species metabolic process"/>
    <property type="evidence" value="ECO:0000250"/>
    <property type="project" value="UniProtKB"/>
</dbReference>
<dbReference type="GO" id="GO:0090399">
    <property type="term" value="P:replicative senescence"/>
    <property type="evidence" value="ECO:0000250"/>
    <property type="project" value="UniProtKB"/>
</dbReference>
<dbReference type="InterPro" id="IPR018450">
    <property type="entry name" value="Romo1/Mgr2"/>
</dbReference>
<dbReference type="PANTHER" id="PTHR28525">
    <property type="entry name" value="REACTIVE OXYGEN SPECIES MODULATOR 1"/>
    <property type="match status" value="1"/>
</dbReference>
<dbReference type="PANTHER" id="PTHR28525:SF1">
    <property type="entry name" value="REACTIVE OXYGEN SPECIES MODULATOR 1"/>
    <property type="match status" value="1"/>
</dbReference>
<dbReference type="Pfam" id="PF10247">
    <property type="entry name" value="Romo1"/>
    <property type="match status" value="1"/>
</dbReference>
<dbReference type="SMART" id="SM01378">
    <property type="entry name" value="Romo1"/>
    <property type="match status" value="1"/>
</dbReference>